<accession>Q9DUC9</accession>
<sequence>MAWPWRRRRWRWRRRRPRWRRWRRRRTWRRRPRRAVRRRRVRRRGRGWRRLYRRYRRRRGRRTYKKKPVLTQWQPTVRRRCFIIGYMPLIICGENLTSKNYASHADDFVKDGPFGGGMTTMQFSLRILYDEFLRFLNIWTHSNQDLDLARYHGFKLTLYRHPTVDFIVIIRNSPPFEDTELTGPNTHPGMLMLRHKKILVPSLRTRPSRRHKITVRIGPPKLFEDKWYSQTDICDVILATVYATACDLQYPFGSPLTENYCISFQVLGSAYNNLISNTLNPNEEQQDIKSAIYNNVNAYLTRITESHMANLISKAPPKQVLKSSDGSLQTDHNDTQFGGNPYNTNQFTTTTVNKIIQGAQNYLTTIKTHLQPNNSAINPNTQWHLEYHAGIYSAPFLSAGRLNPEIKGLYTDITYNPMMDKGTGNKIWCDSLTKADMKYTEGRSKYLIENLPLWAAVWGYLDYCTKTSGDAAFHYNYRVTLISPYTSPMLFNPQDPTKGFVPYSLNFGLGKMPGGKGYVPLRMRANWYPYFFHQQKVLEAIGMSGPFTYRSDEKKAVLTSRYKFKFTWGGNPVSHQVVRNPCKGTGGASASRKPRSVQVTDPKYNTPEITTHTWDIRRGWFGKRFIDRVQQQQASPELLADPPKRPRKEIKGLTEADQEAEKDSGLRLRQVQPWMSSQETQSEQESAPEEQTVEQQLRNQLHTQQLLGFQLRSLMYQVQQTHRNSFIHPLLLPRA</sequence>
<protein>
    <recommendedName>
        <fullName>Capsid protein</fullName>
    </recommendedName>
</protein>
<gene>
    <name type="ORF">ORF1</name>
</gene>
<evidence type="ECO:0000250" key="1"/>
<evidence type="ECO:0000256" key="2">
    <source>
        <dbReference type="SAM" id="MobiDB-lite"/>
    </source>
</evidence>
<evidence type="ECO:0000305" key="3"/>
<organismHost>
    <name type="scientific">Pan troglodytes</name>
    <name type="common">Chimpanzee</name>
    <dbReference type="NCBI Taxonomy" id="9598"/>
</organismHost>
<reference key="1">
    <citation type="journal article" date="2000" name="Virology">
        <title>Species-specific TT viruses in humans and nonhuman primates and their phylogenetic relatedness.</title>
        <authorList>
            <person name="Okamoto H."/>
            <person name="Nishizawa T."/>
            <person name="Tawara A."/>
            <person name="Peng Y."/>
            <person name="Takahashi M."/>
            <person name="Kishimoto J."/>
            <person name="Tanaka T."/>
            <person name="Miyakawa Y."/>
            <person name="Mayumi M."/>
        </authorList>
    </citation>
    <scope>NUCLEOTIDE SEQUENCE [GENOMIC DNA]</scope>
</reference>
<reference key="2">
    <citation type="journal article" date="2007" name="Rev. Med. Virol.">
        <title>Torque teno virus (TTV): current status.</title>
        <authorList>
            <person name="Hino S."/>
            <person name="Miyata H."/>
        </authorList>
    </citation>
    <scope>REVIEW</scope>
</reference>
<organism>
    <name type="scientific">Torque teno virus (isolate Chimpanzee/Japan/Pt-TTV6/2000)</name>
    <name type="common">TTV</name>
    <dbReference type="NCBI Taxonomy" id="687343"/>
    <lineage>
        <taxon>Viruses</taxon>
        <taxon>Viruses incertae sedis</taxon>
        <taxon>Anelloviridae</taxon>
        <taxon>Alphatorquevirus</taxon>
        <taxon>Alphatorquevirus homin4</taxon>
    </lineage>
</organism>
<keyword id="KW-0167">Capsid protein</keyword>
<keyword id="KW-1185">Reference proteome</keyword>
<keyword id="KW-1140">T=1 icosahedral capsid protein</keyword>
<keyword id="KW-0946">Virion</keyword>
<dbReference type="EMBL" id="AB041957">
    <property type="protein sequence ID" value="BAB19308.1"/>
    <property type="molecule type" value="Genomic_DNA"/>
</dbReference>
<dbReference type="RefSeq" id="YP_003587828.1">
    <property type="nucleotide sequence ID" value="NC_014069.1"/>
</dbReference>
<dbReference type="SMR" id="Q9DUC9"/>
<dbReference type="KEGG" id="vg:9086570"/>
<dbReference type="OrthoDB" id="3295at10239"/>
<dbReference type="Proteomes" id="UP000007553">
    <property type="component" value="Genome"/>
</dbReference>
<dbReference type="GO" id="GO:0039615">
    <property type="term" value="C:T=1 icosahedral viral capsid"/>
    <property type="evidence" value="ECO:0007669"/>
    <property type="project" value="UniProtKB-KW"/>
</dbReference>
<dbReference type="InterPro" id="IPR004219">
    <property type="entry name" value="TTvirus_Unk"/>
</dbReference>
<dbReference type="Pfam" id="PF02956">
    <property type="entry name" value="TT_ORF1"/>
    <property type="match status" value="1"/>
</dbReference>
<proteinExistence type="inferred from homology"/>
<name>CAPSD_TTVV8</name>
<comment type="function">
    <text evidence="1">Self assemble to form an icosahedral capsid.</text>
</comment>
<comment type="subcellular location">
    <subcellularLocation>
        <location evidence="3">Virion</location>
    </subcellularLocation>
</comment>
<comment type="similarity">
    <text evidence="3">Belongs to the anelloviridae capsid protein family.</text>
</comment>
<feature type="chain" id="PRO_0000315333" description="Capsid protein">
    <location>
        <begin position="1"/>
        <end position="735"/>
    </location>
</feature>
<feature type="region of interest" description="Disordered" evidence="2">
    <location>
        <begin position="577"/>
        <end position="604"/>
    </location>
</feature>
<feature type="region of interest" description="Disordered" evidence="2">
    <location>
        <begin position="632"/>
        <end position="695"/>
    </location>
</feature>
<feature type="compositionally biased region" description="Basic and acidic residues" evidence="2">
    <location>
        <begin position="649"/>
        <end position="666"/>
    </location>
</feature>
<feature type="compositionally biased region" description="Low complexity" evidence="2">
    <location>
        <begin position="676"/>
        <end position="685"/>
    </location>
</feature>